<reference key="1">
    <citation type="journal article" date="2002" name="Proc. Natl. Acad. Sci. U.S.A.">
        <title>The genome sequence of Bifidobacterium longum reflects its adaptation to the human gastrointestinal tract.</title>
        <authorList>
            <person name="Schell M.A."/>
            <person name="Karmirantzou M."/>
            <person name="Snel B."/>
            <person name="Vilanova D."/>
            <person name="Berger B."/>
            <person name="Pessi G."/>
            <person name="Zwahlen M.-C."/>
            <person name="Desiere F."/>
            <person name="Bork P."/>
            <person name="Delley M."/>
            <person name="Pridmore R.D."/>
            <person name="Arigoni F."/>
        </authorList>
    </citation>
    <scope>NUCLEOTIDE SEQUENCE [LARGE SCALE GENOMIC DNA]</scope>
    <source>
        <strain>NCC 2705</strain>
    </source>
</reference>
<gene>
    <name evidence="1" type="primary">pnp</name>
    <name type="ordered locus">BL1546</name>
</gene>
<protein>
    <recommendedName>
        <fullName evidence="1">Polyribonucleotide nucleotidyltransferase</fullName>
        <ecNumber evidence="1">2.7.7.8</ecNumber>
    </recommendedName>
    <alternativeName>
        <fullName evidence="1">Polynucleotide phosphorylase</fullName>
        <shortName evidence="1">PNPase</shortName>
    </alternativeName>
</protein>
<keyword id="KW-0963">Cytoplasm</keyword>
<keyword id="KW-0460">Magnesium</keyword>
<keyword id="KW-0479">Metal-binding</keyword>
<keyword id="KW-0548">Nucleotidyltransferase</keyword>
<keyword id="KW-1185">Reference proteome</keyword>
<keyword id="KW-0694">RNA-binding</keyword>
<keyword id="KW-0808">Transferase</keyword>
<name>PNP_BIFLO</name>
<feature type="chain" id="PRO_0000329532" description="Polyribonucleotide nucleotidyltransferase">
    <location>
        <begin position="1"/>
        <end position="913"/>
    </location>
</feature>
<feature type="domain" description="KH" evidence="1">
    <location>
        <begin position="587"/>
        <end position="646"/>
    </location>
</feature>
<feature type="domain" description="S1 motif" evidence="1">
    <location>
        <begin position="658"/>
        <end position="730"/>
    </location>
</feature>
<feature type="region of interest" description="Disordered" evidence="2">
    <location>
        <begin position="407"/>
        <end position="427"/>
    </location>
</feature>
<feature type="region of interest" description="Disordered" evidence="2">
    <location>
        <begin position="727"/>
        <end position="913"/>
    </location>
</feature>
<feature type="compositionally biased region" description="Basic and acidic residues" evidence="2">
    <location>
        <begin position="742"/>
        <end position="789"/>
    </location>
</feature>
<feature type="compositionally biased region" description="Basic and acidic residues" evidence="2">
    <location>
        <begin position="797"/>
        <end position="865"/>
    </location>
</feature>
<feature type="compositionally biased region" description="Basic and acidic residues" evidence="2">
    <location>
        <begin position="872"/>
        <end position="898"/>
    </location>
</feature>
<feature type="binding site" evidence="1">
    <location>
        <position position="521"/>
    </location>
    <ligand>
        <name>Mg(2+)</name>
        <dbReference type="ChEBI" id="CHEBI:18420"/>
    </ligand>
</feature>
<feature type="binding site" evidence="1">
    <location>
        <position position="527"/>
    </location>
    <ligand>
        <name>Mg(2+)</name>
        <dbReference type="ChEBI" id="CHEBI:18420"/>
    </ligand>
</feature>
<comment type="function">
    <text evidence="1">Involved in mRNA degradation. Catalyzes the phosphorolysis of single-stranded polyribonucleotides processively in the 3'- to 5'-direction.</text>
</comment>
<comment type="catalytic activity">
    <reaction evidence="1">
        <text>RNA(n+1) + phosphate = RNA(n) + a ribonucleoside 5'-diphosphate</text>
        <dbReference type="Rhea" id="RHEA:22096"/>
        <dbReference type="Rhea" id="RHEA-COMP:14527"/>
        <dbReference type="Rhea" id="RHEA-COMP:17342"/>
        <dbReference type="ChEBI" id="CHEBI:43474"/>
        <dbReference type="ChEBI" id="CHEBI:57930"/>
        <dbReference type="ChEBI" id="CHEBI:140395"/>
        <dbReference type="EC" id="2.7.7.8"/>
    </reaction>
</comment>
<comment type="cofactor">
    <cofactor evidence="1">
        <name>Mg(2+)</name>
        <dbReference type="ChEBI" id="CHEBI:18420"/>
    </cofactor>
</comment>
<comment type="subcellular location">
    <subcellularLocation>
        <location evidence="1">Cytoplasm</location>
    </subcellularLocation>
</comment>
<comment type="similarity">
    <text evidence="1">Belongs to the polyribonucleotide nucleotidyltransferase family.</text>
</comment>
<proteinExistence type="inferred from homology"/>
<evidence type="ECO:0000255" key="1">
    <source>
        <dbReference type="HAMAP-Rule" id="MF_01595"/>
    </source>
</evidence>
<evidence type="ECO:0000256" key="2">
    <source>
        <dbReference type="SAM" id="MobiDB-lite"/>
    </source>
</evidence>
<dbReference type="EC" id="2.7.7.8" evidence="1"/>
<dbReference type="EMBL" id="AE014295">
    <property type="protein sequence ID" value="AAN25338.1"/>
    <property type="molecule type" value="Genomic_DNA"/>
</dbReference>
<dbReference type="RefSeq" id="NP_696702.1">
    <property type="nucleotide sequence ID" value="NC_004307.2"/>
</dbReference>
<dbReference type="RefSeq" id="WP_010081538.1">
    <property type="nucleotide sequence ID" value="NC_004307.2"/>
</dbReference>
<dbReference type="SMR" id="Q8G447"/>
<dbReference type="STRING" id="206672.BL1546"/>
<dbReference type="EnsemblBacteria" id="AAN25338">
    <property type="protein sequence ID" value="AAN25338"/>
    <property type="gene ID" value="BL1546"/>
</dbReference>
<dbReference type="KEGG" id="blo:BL1546"/>
<dbReference type="PATRIC" id="fig|206672.9.peg.1600"/>
<dbReference type="HOGENOM" id="CLU_004217_1_0_11"/>
<dbReference type="OrthoDB" id="9804305at2"/>
<dbReference type="PhylomeDB" id="Q8G447"/>
<dbReference type="Proteomes" id="UP000000439">
    <property type="component" value="Chromosome"/>
</dbReference>
<dbReference type="GO" id="GO:0005829">
    <property type="term" value="C:cytosol"/>
    <property type="evidence" value="ECO:0007669"/>
    <property type="project" value="TreeGrafter"/>
</dbReference>
<dbReference type="GO" id="GO:0000175">
    <property type="term" value="F:3'-5'-RNA exonuclease activity"/>
    <property type="evidence" value="ECO:0007669"/>
    <property type="project" value="TreeGrafter"/>
</dbReference>
<dbReference type="GO" id="GO:0000287">
    <property type="term" value="F:magnesium ion binding"/>
    <property type="evidence" value="ECO:0007669"/>
    <property type="project" value="UniProtKB-UniRule"/>
</dbReference>
<dbReference type="GO" id="GO:0004654">
    <property type="term" value="F:polyribonucleotide nucleotidyltransferase activity"/>
    <property type="evidence" value="ECO:0007669"/>
    <property type="project" value="UniProtKB-UniRule"/>
</dbReference>
<dbReference type="GO" id="GO:0003723">
    <property type="term" value="F:RNA binding"/>
    <property type="evidence" value="ECO:0007669"/>
    <property type="project" value="UniProtKB-UniRule"/>
</dbReference>
<dbReference type="GO" id="GO:0006402">
    <property type="term" value="P:mRNA catabolic process"/>
    <property type="evidence" value="ECO:0007669"/>
    <property type="project" value="UniProtKB-UniRule"/>
</dbReference>
<dbReference type="GO" id="GO:0006396">
    <property type="term" value="P:RNA processing"/>
    <property type="evidence" value="ECO:0007669"/>
    <property type="project" value="InterPro"/>
</dbReference>
<dbReference type="CDD" id="cd02393">
    <property type="entry name" value="KH-I_PNPase"/>
    <property type="match status" value="1"/>
</dbReference>
<dbReference type="CDD" id="cd11364">
    <property type="entry name" value="RNase_PH_PNPase_2"/>
    <property type="match status" value="1"/>
</dbReference>
<dbReference type="CDD" id="cd04472">
    <property type="entry name" value="S1_PNPase"/>
    <property type="match status" value="1"/>
</dbReference>
<dbReference type="FunFam" id="3.30.1370.10:FF:000001">
    <property type="entry name" value="Polyribonucleotide nucleotidyltransferase"/>
    <property type="match status" value="1"/>
</dbReference>
<dbReference type="FunFam" id="3.30.230.70:FF:000001">
    <property type="entry name" value="Polyribonucleotide nucleotidyltransferase"/>
    <property type="match status" value="1"/>
</dbReference>
<dbReference type="FunFam" id="3.30.230.70:FF:000002">
    <property type="entry name" value="Polyribonucleotide nucleotidyltransferase"/>
    <property type="match status" value="1"/>
</dbReference>
<dbReference type="Gene3D" id="3.30.230.70">
    <property type="entry name" value="GHMP Kinase, N-terminal domain"/>
    <property type="match status" value="2"/>
</dbReference>
<dbReference type="Gene3D" id="3.30.1370.10">
    <property type="entry name" value="K Homology domain, type 1"/>
    <property type="match status" value="1"/>
</dbReference>
<dbReference type="Gene3D" id="2.40.50.140">
    <property type="entry name" value="Nucleic acid-binding proteins"/>
    <property type="match status" value="1"/>
</dbReference>
<dbReference type="HAMAP" id="MF_01595">
    <property type="entry name" value="PNPase"/>
    <property type="match status" value="1"/>
</dbReference>
<dbReference type="InterPro" id="IPR001247">
    <property type="entry name" value="ExoRNase_PH_dom1"/>
</dbReference>
<dbReference type="InterPro" id="IPR036345">
    <property type="entry name" value="ExoRNase_PH_dom2_sf"/>
</dbReference>
<dbReference type="InterPro" id="IPR014069">
    <property type="entry name" value="GPSI/PNP"/>
</dbReference>
<dbReference type="InterPro" id="IPR004087">
    <property type="entry name" value="KH_dom"/>
</dbReference>
<dbReference type="InterPro" id="IPR004088">
    <property type="entry name" value="KH_dom_type_1"/>
</dbReference>
<dbReference type="InterPro" id="IPR036612">
    <property type="entry name" value="KH_dom_type_1_sf"/>
</dbReference>
<dbReference type="InterPro" id="IPR012340">
    <property type="entry name" value="NA-bd_OB-fold"/>
</dbReference>
<dbReference type="InterPro" id="IPR012162">
    <property type="entry name" value="PNPase"/>
</dbReference>
<dbReference type="InterPro" id="IPR027408">
    <property type="entry name" value="PNPase/RNase_PH_dom_sf"/>
</dbReference>
<dbReference type="InterPro" id="IPR015848">
    <property type="entry name" value="PNPase_PH_RNA-bd_bac/org-type"/>
</dbReference>
<dbReference type="InterPro" id="IPR036456">
    <property type="entry name" value="PNPase_PH_RNA-bd_sf"/>
</dbReference>
<dbReference type="InterPro" id="IPR020568">
    <property type="entry name" value="Ribosomal_Su5_D2-typ_SF"/>
</dbReference>
<dbReference type="InterPro" id="IPR003029">
    <property type="entry name" value="S1_domain"/>
</dbReference>
<dbReference type="NCBIfam" id="TIGR03591">
    <property type="entry name" value="polynuc_phos"/>
    <property type="match status" value="1"/>
</dbReference>
<dbReference type="NCBIfam" id="TIGR02696">
    <property type="entry name" value="pppGpp_PNP"/>
    <property type="match status" value="1"/>
</dbReference>
<dbReference type="NCBIfam" id="NF008805">
    <property type="entry name" value="PRK11824.1"/>
    <property type="match status" value="1"/>
</dbReference>
<dbReference type="PANTHER" id="PTHR11252">
    <property type="entry name" value="POLYRIBONUCLEOTIDE NUCLEOTIDYLTRANSFERASE"/>
    <property type="match status" value="1"/>
</dbReference>
<dbReference type="PANTHER" id="PTHR11252:SF0">
    <property type="entry name" value="POLYRIBONUCLEOTIDE NUCLEOTIDYLTRANSFERASE 1, MITOCHONDRIAL"/>
    <property type="match status" value="1"/>
</dbReference>
<dbReference type="Pfam" id="PF00013">
    <property type="entry name" value="KH_1"/>
    <property type="match status" value="1"/>
</dbReference>
<dbReference type="Pfam" id="PF03726">
    <property type="entry name" value="PNPase"/>
    <property type="match status" value="1"/>
</dbReference>
<dbReference type="Pfam" id="PF01138">
    <property type="entry name" value="RNase_PH"/>
    <property type="match status" value="2"/>
</dbReference>
<dbReference type="Pfam" id="PF00575">
    <property type="entry name" value="S1"/>
    <property type="match status" value="1"/>
</dbReference>
<dbReference type="SMART" id="SM00322">
    <property type="entry name" value="KH"/>
    <property type="match status" value="1"/>
</dbReference>
<dbReference type="SMART" id="SM00316">
    <property type="entry name" value="S1"/>
    <property type="match status" value="1"/>
</dbReference>
<dbReference type="SUPFAM" id="SSF54791">
    <property type="entry name" value="Eukaryotic type KH-domain (KH-domain type I)"/>
    <property type="match status" value="1"/>
</dbReference>
<dbReference type="SUPFAM" id="SSF50249">
    <property type="entry name" value="Nucleic acid-binding proteins"/>
    <property type="match status" value="1"/>
</dbReference>
<dbReference type="SUPFAM" id="SSF46915">
    <property type="entry name" value="Polynucleotide phosphorylase/guanosine pentaphosphate synthase (PNPase/GPSI), domain 3"/>
    <property type="match status" value="1"/>
</dbReference>
<dbReference type="SUPFAM" id="SSF55666">
    <property type="entry name" value="Ribonuclease PH domain 2-like"/>
    <property type="match status" value="2"/>
</dbReference>
<dbReference type="SUPFAM" id="SSF54211">
    <property type="entry name" value="Ribosomal protein S5 domain 2-like"/>
    <property type="match status" value="2"/>
</dbReference>
<dbReference type="PROSITE" id="PS50084">
    <property type="entry name" value="KH_TYPE_1"/>
    <property type="match status" value="1"/>
</dbReference>
<dbReference type="PROSITE" id="PS50126">
    <property type="entry name" value="S1"/>
    <property type="match status" value="1"/>
</dbReference>
<sequence length="913" mass="101847">MEGPEIKAVEAVIDNGSFGKRTLRFETGRLAQQADGAVAAYLDDDSMILSTTTAGSSPKENYDFFPLTVDVEEKMYAAGKIPGSFFRREGRPSSEAILACRIIDRPLRPLFPHTLRNEVQVVETVLAVNPDDAYDVIALNAASASTMISGLPFEGPVSGVRLALIDGQWVAFPRWSERERAVFEIVVAGRVIENGDVAIAMIEAGAGKNAWHLIYDEGQTKPDEEVVAGGLEAAKPFIKVICEAQDELKKIAAKETKEFQLFPEYTDELYARIDEIAHKDLDEALSIAEKLPRQDRIHEIKEHVREVLADEFTDMDDAEKDKELGNAFKELQRQIVRRRILTEDYRIDGRGLRDIRTLSAEVDIVPRVHGSALFQRGETQILGVTTLNMLKMEQQIDALSGPQSKRYMHNYEMPPYSTGETGRVGSPKRREIGHGALAEKALVPVLPSREEFPYAIRQVSEAIGSNGSTSMGSVCASTLSLLAAGVPLKAPVAGIAMGLVSGDVDGKHIFKTLTDILGAEDAFGDMDFKVAGTSEFITALQLDTKLDGIPADILAAALQQAKEARATILEVINECIDGPAEMSEFAPRIITTSVPVEKIGEVIGPKGKMINQIQEDTGAEIAIEDDGTVFISSEGGEAAEKAKAIIDQIANPHVPEAGETYNGKVVKTTSFGAFVNLTPGTDGLLHISQIRNLANGERIDAVEDVLKEGDTVEVIVQGVDDRGKISLAIPGFEDQENNARPSRGDRDDRRGGRGRGDRDDRRGGRGRRSERDDRDFDDRDDRPRRRRSDDFEDDYDDRPRRRRSDDRDFDRDDRDDDRPRRRRSADRDFDDRDDRDARDSRDDDRPRRRRSSDRDDRGDRDDRRGGSRGRGRGSDRNPRYATDDNYDDYRADREERTERPRRRVRRDFDPFED</sequence>
<accession>Q8G447</accession>
<organism>
    <name type="scientific">Bifidobacterium longum (strain NCC 2705)</name>
    <dbReference type="NCBI Taxonomy" id="206672"/>
    <lineage>
        <taxon>Bacteria</taxon>
        <taxon>Bacillati</taxon>
        <taxon>Actinomycetota</taxon>
        <taxon>Actinomycetes</taxon>
        <taxon>Bifidobacteriales</taxon>
        <taxon>Bifidobacteriaceae</taxon>
        <taxon>Bifidobacterium</taxon>
    </lineage>
</organism>